<reference key="1">
    <citation type="journal article" date="1997" name="Nature">
        <title>Molecular basis of symbiosis between Rhizobium and legumes.</title>
        <authorList>
            <person name="Freiberg C.A."/>
            <person name="Fellay R."/>
            <person name="Bairoch A."/>
            <person name="Broughton W.J."/>
            <person name="Rosenthal A."/>
            <person name="Perret X."/>
        </authorList>
    </citation>
    <scope>NUCLEOTIDE SEQUENCE [LARGE SCALE GENOMIC DNA]</scope>
    <source>
        <strain>NBRC 101917 / NGR234</strain>
    </source>
</reference>
<reference key="2">
    <citation type="journal article" date="2009" name="Appl. Environ. Microbiol.">
        <title>Rhizobium sp. strain NGR234 possesses a remarkable number of secretion systems.</title>
        <authorList>
            <person name="Schmeisser C."/>
            <person name="Liesegang H."/>
            <person name="Krysciak D."/>
            <person name="Bakkou N."/>
            <person name="Le Quere A."/>
            <person name="Wollherr A."/>
            <person name="Heinemeyer I."/>
            <person name="Morgenstern B."/>
            <person name="Pommerening-Roeser A."/>
            <person name="Flores M."/>
            <person name="Palacios R."/>
            <person name="Brenner S."/>
            <person name="Gottschalk G."/>
            <person name="Schmitz R.A."/>
            <person name="Broughton W.J."/>
            <person name="Perret X."/>
            <person name="Strittmatter A.W."/>
            <person name="Streit W.R."/>
        </authorList>
    </citation>
    <scope>NUCLEOTIDE SEQUENCE [LARGE SCALE GENOMIC DNA]</scope>
    <source>
        <strain>NBRC 101917 / NGR234</strain>
    </source>
</reference>
<geneLocation type="plasmid">
    <name>sym pNGR234a</name>
</geneLocation>
<name>Y4KE_SINFN</name>
<gene>
    <name type="ordered locus">NGR_a02910</name>
    <name type="ORF">y4kE</name>
</gene>
<feature type="chain" id="PRO_0000200887" description="Uncharacterized protein y4kE">
    <location>
        <begin position="1"/>
        <end position="347"/>
    </location>
</feature>
<dbReference type="EMBL" id="U00090">
    <property type="protein sequence ID" value="AAB91736.1"/>
    <property type="molecule type" value="Genomic_DNA"/>
</dbReference>
<dbReference type="RefSeq" id="NP_443934.1">
    <property type="nucleotide sequence ID" value="NC_000914.2"/>
</dbReference>
<dbReference type="RefSeq" id="WP_010875314.1">
    <property type="nucleotide sequence ID" value="NC_000914.2"/>
</dbReference>
<dbReference type="KEGG" id="rhi:NGR_a02910"/>
<dbReference type="PATRIC" id="fig|394.7.peg.308"/>
<dbReference type="HOGENOM" id="CLU_699928_0_0_5"/>
<dbReference type="OrthoDB" id="7052039at2"/>
<dbReference type="Proteomes" id="UP000001054">
    <property type="component" value="Plasmid pNGR234a"/>
</dbReference>
<dbReference type="GO" id="GO:0004197">
    <property type="term" value="F:cysteine-type endopeptidase activity"/>
    <property type="evidence" value="ECO:0007669"/>
    <property type="project" value="InterPro"/>
</dbReference>
<dbReference type="GO" id="GO:0006508">
    <property type="term" value="P:proteolysis"/>
    <property type="evidence" value="ECO:0007669"/>
    <property type="project" value="InterPro"/>
</dbReference>
<dbReference type="Gene3D" id="3.40.50.1460">
    <property type="match status" value="1"/>
</dbReference>
<dbReference type="InterPro" id="IPR029030">
    <property type="entry name" value="Caspase-like_dom_sf"/>
</dbReference>
<dbReference type="InterPro" id="IPR011600">
    <property type="entry name" value="Pept_C14_caspase"/>
</dbReference>
<dbReference type="Pfam" id="PF00656">
    <property type="entry name" value="Peptidase_C14"/>
    <property type="match status" value="1"/>
</dbReference>
<dbReference type="SUPFAM" id="SSF52129">
    <property type="entry name" value="Caspase-like"/>
    <property type="match status" value="1"/>
</dbReference>
<accession>P55525</accession>
<protein>
    <recommendedName>
        <fullName>Uncharacterized protein y4kE</fullName>
    </recommendedName>
</protein>
<proteinExistence type="predicted"/>
<sequence length="347" mass="37980">MVAVADWFLTGSDAMPAGQAKDPSEAFSNADAPLGSLVMLASPNGSYDTPFGTKVKTTRPSIANLKTAYVAWLERLKLNPQSRGVFYFCGHGISDGETQYLVADDFGEDEADIWNAVFQLTMTVQATLRKSKASLFYFIDACMELSEEIINQLEDPKALIGGSRRGALTTTDWAIVRATTANRLAYAPDGGVAHFTQALLSALRGHCGVEHPSGNGYSVDVARLRAAISEFLEFLQPEGMADRQKIGKTEGDGNWTVPLHVLSKRPSVMLELDVLPQGFRPIAQAFMEDTALVRDTKPLATGPVRFVREHGEWTYGTNSTDPTSFPEKIYNRKLLTNAAVRRLIKVD</sequence>
<keyword id="KW-0614">Plasmid</keyword>
<keyword id="KW-1185">Reference proteome</keyword>
<organism>
    <name type="scientific">Sinorhizobium fredii (strain NBRC 101917 / NGR234)</name>
    <dbReference type="NCBI Taxonomy" id="394"/>
    <lineage>
        <taxon>Bacteria</taxon>
        <taxon>Pseudomonadati</taxon>
        <taxon>Pseudomonadota</taxon>
        <taxon>Alphaproteobacteria</taxon>
        <taxon>Hyphomicrobiales</taxon>
        <taxon>Rhizobiaceae</taxon>
        <taxon>Sinorhizobium/Ensifer group</taxon>
        <taxon>Sinorhizobium</taxon>
    </lineage>
</organism>